<evidence type="ECO:0000250" key="1"/>
<evidence type="ECO:0000256" key="2">
    <source>
        <dbReference type="SAM" id="MobiDB-lite"/>
    </source>
</evidence>
<evidence type="ECO:0000269" key="3">
    <source>
    </source>
</evidence>
<evidence type="ECO:0000269" key="4">
    <source>
    </source>
</evidence>
<evidence type="ECO:0000269" key="5">
    <source>
    </source>
</evidence>
<evidence type="ECO:0000303" key="6">
    <source>
    </source>
</evidence>
<evidence type="ECO:0000303" key="7">
    <source>
    </source>
</evidence>
<evidence type="ECO:0000303" key="8">
    <source>
    </source>
</evidence>
<evidence type="ECO:0000305" key="9"/>
<evidence type="ECO:0000305" key="10">
    <source>
    </source>
</evidence>
<name>CABYR_HUMAN</name>
<sequence length="493" mass="52774">MISSKPRLVVPYGLKTLLEGISRAVLKTNPSNINQFAAAYFQELTMYRGNTTMDIKDLVKQFHQIKVEKWSEGTTPQKKLECLKEPGKTSVESKVPTQMEKSTDTDEDNVTRTEYSDKTTQFPSVYAVPGTEQTEAVGGLSSKPATPKTTTPPSSPPPTAVSPEFAYVPADPAQLAAQMLGKVSSIHSDQSDVLMVDVATSMPVVIKEVPSSEAAEDVMVAAPLVCSGKVLEVQVVNQTSVHVDLGSQPKENEAEPSTASSVPLQDEQEPPAYDQAPEVTLQADIEVMSTVHISSVYNDVPVTEGVVYIEQLPEQIVIPFTDQVACLKENEQSKENEQSPRVSPKSVVEKTTSGMSKKSVESVKLAQLEENAKYSSVYMEAEATALLSDTSLKGQPEVPAQLLDAEGAIKIGSEKSLHLEVEITSIVSDNTGQEESGENSVPQEMEGKPVLSGEAAEAVHSGTSVKSSSGPFPPAPEGLTAPEIEPEGESTAE</sequence>
<organism>
    <name type="scientific">Homo sapiens</name>
    <name type="common">Human</name>
    <dbReference type="NCBI Taxonomy" id="9606"/>
    <lineage>
        <taxon>Eukaryota</taxon>
        <taxon>Metazoa</taxon>
        <taxon>Chordata</taxon>
        <taxon>Craniata</taxon>
        <taxon>Vertebrata</taxon>
        <taxon>Euteleostomi</taxon>
        <taxon>Mammalia</taxon>
        <taxon>Eutheria</taxon>
        <taxon>Euarchontoglires</taxon>
        <taxon>Primates</taxon>
        <taxon>Haplorrhini</taxon>
        <taxon>Catarrhini</taxon>
        <taxon>Hominidae</taxon>
        <taxon>Homo</taxon>
    </lineage>
</organism>
<protein>
    <recommendedName>
        <fullName>Calcium-binding tyrosine phosphorylation-regulated protein</fullName>
    </recommendedName>
    <alternativeName>
        <fullName>Calcium-binding protein 86</fullName>
    </alternativeName>
    <alternativeName>
        <fullName>Cancer/testis antigen 88</fullName>
        <shortName>CT88</shortName>
    </alternativeName>
    <alternativeName>
        <fullName>Fibrousheathin II</fullName>
    </alternativeName>
    <alternativeName>
        <fullName>Fibrousheathin-2</fullName>
        <shortName>FSP-2</shortName>
    </alternativeName>
    <alternativeName>
        <fullName>Testis-specific calcium-binding protein CBP86</fullName>
    </alternativeName>
</protein>
<reference key="1">
    <citation type="journal article" date="2002" name="Dev. Biol.">
        <title>CABYR, a novel calcium-binding tyrosine phosphorylation-regulated fibrous sheath protein involved in capacitation.</title>
        <authorList>
            <person name="Naaby-Hansen S."/>
            <person name="Mandal A."/>
            <person name="Wolkowicz M.J."/>
            <person name="Sen B."/>
            <person name="Westbrook V.A."/>
            <person name="Shetty J."/>
            <person name="Coonrod S.A."/>
            <person name="Klotz K.L."/>
            <person name="Kim Y.-H."/>
            <person name="Bush L.A."/>
            <person name="Flickinger C.J."/>
            <person name="Herr J.C."/>
        </authorList>
    </citation>
    <scope>NUCLEOTIDE SEQUENCE [MRNA] (ISOFORMS 1; 2; 3; 4; 5 AND 6)</scope>
    <scope>PROTEIN SEQUENCE OF 8-23; 28-48; 379-388 AND 394-410</scope>
    <scope>VARIANTS ARG-448 AND ALA-490</scope>
    <scope>CALCIUM-BINDING</scope>
    <scope>PHOSPHORYLATION</scope>
    <scope>SUBCELLULAR LOCATION</scope>
    <scope>TISSUE SPECIFICITY</scope>
    <source>
        <tissue>Testis</tissue>
    </source>
</reference>
<reference key="2">
    <citation type="journal article" date="2004" name="Nat. Genet.">
        <title>Complete sequencing and characterization of 21,243 full-length human cDNAs.</title>
        <authorList>
            <person name="Ota T."/>
            <person name="Suzuki Y."/>
            <person name="Nishikawa T."/>
            <person name="Otsuki T."/>
            <person name="Sugiyama T."/>
            <person name="Irie R."/>
            <person name="Wakamatsu A."/>
            <person name="Hayashi K."/>
            <person name="Sato H."/>
            <person name="Nagai K."/>
            <person name="Kimura K."/>
            <person name="Makita H."/>
            <person name="Sekine M."/>
            <person name="Obayashi M."/>
            <person name="Nishi T."/>
            <person name="Shibahara T."/>
            <person name="Tanaka T."/>
            <person name="Ishii S."/>
            <person name="Yamamoto J."/>
            <person name="Saito K."/>
            <person name="Kawai Y."/>
            <person name="Isono Y."/>
            <person name="Nakamura Y."/>
            <person name="Nagahari K."/>
            <person name="Murakami K."/>
            <person name="Yasuda T."/>
            <person name="Iwayanagi T."/>
            <person name="Wagatsuma M."/>
            <person name="Shiratori A."/>
            <person name="Sudo H."/>
            <person name="Hosoiri T."/>
            <person name="Kaku Y."/>
            <person name="Kodaira H."/>
            <person name="Kondo H."/>
            <person name="Sugawara M."/>
            <person name="Takahashi M."/>
            <person name="Kanda K."/>
            <person name="Yokoi T."/>
            <person name="Furuya T."/>
            <person name="Kikkawa E."/>
            <person name="Omura Y."/>
            <person name="Abe K."/>
            <person name="Kamihara K."/>
            <person name="Katsuta N."/>
            <person name="Sato K."/>
            <person name="Tanikawa M."/>
            <person name="Yamazaki M."/>
            <person name="Ninomiya K."/>
            <person name="Ishibashi T."/>
            <person name="Yamashita H."/>
            <person name="Murakawa K."/>
            <person name="Fujimori K."/>
            <person name="Tanai H."/>
            <person name="Kimata M."/>
            <person name="Watanabe M."/>
            <person name="Hiraoka S."/>
            <person name="Chiba Y."/>
            <person name="Ishida S."/>
            <person name="Ono Y."/>
            <person name="Takiguchi S."/>
            <person name="Watanabe S."/>
            <person name="Yosida M."/>
            <person name="Hotuta T."/>
            <person name="Kusano J."/>
            <person name="Kanehori K."/>
            <person name="Takahashi-Fujii A."/>
            <person name="Hara H."/>
            <person name="Tanase T.-O."/>
            <person name="Nomura Y."/>
            <person name="Togiya S."/>
            <person name="Komai F."/>
            <person name="Hara R."/>
            <person name="Takeuchi K."/>
            <person name="Arita M."/>
            <person name="Imose N."/>
            <person name="Musashino K."/>
            <person name="Yuuki H."/>
            <person name="Oshima A."/>
            <person name="Sasaki N."/>
            <person name="Aotsuka S."/>
            <person name="Yoshikawa Y."/>
            <person name="Matsunawa H."/>
            <person name="Ichihara T."/>
            <person name="Shiohata N."/>
            <person name="Sano S."/>
            <person name="Moriya S."/>
            <person name="Momiyama H."/>
            <person name="Satoh N."/>
            <person name="Takami S."/>
            <person name="Terashima Y."/>
            <person name="Suzuki O."/>
            <person name="Nakagawa S."/>
            <person name="Senoh A."/>
            <person name="Mizoguchi H."/>
            <person name="Goto Y."/>
            <person name="Shimizu F."/>
            <person name="Wakebe H."/>
            <person name="Hishigaki H."/>
            <person name="Watanabe T."/>
            <person name="Sugiyama A."/>
            <person name="Takemoto M."/>
            <person name="Kawakami B."/>
            <person name="Yamazaki M."/>
            <person name="Watanabe K."/>
            <person name="Kumagai A."/>
            <person name="Itakura S."/>
            <person name="Fukuzumi Y."/>
            <person name="Fujimori Y."/>
            <person name="Komiyama M."/>
            <person name="Tashiro H."/>
            <person name="Tanigami A."/>
            <person name="Fujiwara T."/>
            <person name="Ono T."/>
            <person name="Yamada K."/>
            <person name="Fujii Y."/>
            <person name="Ozaki K."/>
            <person name="Hirao M."/>
            <person name="Ohmori Y."/>
            <person name="Kawabata A."/>
            <person name="Hikiji T."/>
            <person name="Kobatake N."/>
            <person name="Inagaki H."/>
            <person name="Ikema Y."/>
            <person name="Okamoto S."/>
            <person name="Okitani R."/>
            <person name="Kawakami T."/>
            <person name="Noguchi S."/>
            <person name="Itoh T."/>
            <person name="Shigeta K."/>
            <person name="Senba T."/>
            <person name="Matsumura K."/>
            <person name="Nakajima Y."/>
            <person name="Mizuno T."/>
            <person name="Morinaga M."/>
            <person name="Sasaki M."/>
            <person name="Togashi T."/>
            <person name="Oyama M."/>
            <person name="Hata H."/>
            <person name="Watanabe M."/>
            <person name="Komatsu T."/>
            <person name="Mizushima-Sugano J."/>
            <person name="Satoh T."/>
            <person name="Shirai Y."/>
            <person name="Takahashi Y."/>
            <person name="Nakagawa K."/>
            <person name="Okumura K."/>
            <person name="Nagase T."/>
            <person name="Nomura N."/>
            <person name="Kikuchi H."/>
            <person name="Masuho Y."/>
            <person name="Yamashita R."/>
            <person name="Nakai K."/>
            <person name="Yada T."/>
            <person name="Nakamura Y."/>
            <person name="Ohara O."/>
            <person name="Isogai T."/>
            <person name="Sugano S."/>
        </authorList>
    </citation>
    <scope>NUCLEOTIDE SEQUENCE [LARGE SCALE MRNA] (ISOFORM 2)</scope>
    <source>
        <tissue>Brain</tissue>
    </source>
</reference>
<reference key="3">
    <citation type="journal article" date="2005" name="Nature">
        <title>DNA sequence and analysis of human chromosome 18.</title>
        <authorList>
            <person name="Nusbaum C."/>
            <person name="Zody M.C."/>
            <person name="Borowsky M.L."/>
            <person name="Kamal M."/>
            <person name="Kodira C.D."/>
            <person name="Taylor T.D."/>
            <person name="Whittaker C.A."/>
            <person name="Chang J.L."/>
            <person name="Cuomo C.A."/>
            <person name="Dewar K."/>
            <person name="FitzGerald M.G."/>
            <person name="Yang X."/>
            <person name="Abouelleil A."/>
            <person name="Allen N.R."/>
            <person name="Anderson S."/>
            <person name="Bloom T."/>
            <person name="Bugalter B."/>
            <person name="Butler J."/>
            <person name="Cook A."/>
            <person name="DeCaprio D."/>
            <person name="Engels R."/>
            <person name="Garber M."/>
            <person name="Gnirke A."/>
            <person name="Hafez N."/>
            <person name="Hall J.L."/>
            <person name="Norman C.H."/>
            <person name="Itoh T."/>
            <person name="Jaffe D.B."/>
            <person name="Kuroki Y."/>
            <person name="Lehoczky J."/>
            <person name="Lui A."/>
            <person name="Macdonald P."/>
            <person name="Mauceli E."/>
            <person name="Mikkelsen T.S."/>
            <person name="Naylor J.W."/>
            <person name="Nicol R."/>
            <person name="Nguyen C."/>
            <person name="Noguchi H."/>
            <person name="O'Leary S.B."/>
            <person name="Piqani B."/>
            <person name="Smith C.L."/>
            <person name="Talamas J.A."/>
            <person name="Topham K."/>
            <person name="Totoki Y."/>
            <person name="Toyoda A."/>
            <person name="Wain H.M."/>
            <person name="Young S.K."/>
            <person name="Zeng Q."/>
            <person name="Zimmer A.R."/>
            <person name="Fujiyama A."/>
            <person name="Hattori M."/>
            <person name="Birren B.W."/>
            <person name="Sakaki Y."/>
            <person name="Lander E.S."/>
        </authorList>
    </citation>
    <scope>NUCLEOTIDE SEQUENCE [LARGE SCALE GENOMIC DNA]</scope>
</reference>
<reference key="4">
    <citation type="submission" date="2005-07" db="EMBL/GenBank/DDBJ databases">
        <authorList>
            <person name="Mural R.J."/>
            <person name="Istrail S."/>
            <person name="Sutton G.G."/>
            <person name="Florea L."/>
            <person name="Halpern A.L."/>
            <person name="Mobarry C.M."/>
            <person name="Lippert R."/>
            <person name="Walenz B."/>
            <person name="Shatkay H."/>
            <person name="Dew I."/>
            <person name="Miller J.R."/>
            <person name="Flanigan M.J."/>
            <person name="Edwards N.J."/>
            <person name="Bolanos R."/>
            <person name="Fasulo D."/>
            <person name="Halldorsson B.V."/>
            <person name="Hannenhalli S."/>
            <person name="Turner R."/>
            <person name="Yooseph S."/>
            <person name="Lu F."/>
            <person name="Nusskern D.R."/>
            <person name="Shue B.C."/>
            <person name="Zheng X.H."/>
            <person name="Zhong F."/>
            <person name="Delcher A.L."/>
            <person name="Huson D.H."/>
            <person name="Kravitz S.A."/>
            <person name="Mouchard L."/>
            <person name="Reinert K."/>
            <person name="Remington K.A."/>
            <person name="Clark A.G."/>
            <person name="Waterman M.S."/>
            <person name="Eichler E.E."/>
            <person name="Adams M.D."/>
            <person name="Hunkapiller M.W."/>
            <person name="Myers E.W."/>
            <person name="Venter J.C."/>
        </authorList>
    </citation>
    <scope>NUCLEOTIDE SEQUENCE [LARGE SCALE GENOMIC DNA]</scope>
</reference>
<reference key="5">
    <citation type="journal article" date="2004" name="Genome Res.">
        <title>The status, quality, and expansion of the NIH full-length cDNA project: the Mammalian Gene Collection (MGC).</title>
        <authorList>
            <consortium name="The MGC Project Team"/>
        </authorList>
    </citation>
    <scope>NUCLEOTIDE SEQUENCE [LARGE SCALE MRNA] (ISOFORM 3)</scope>
    <source>
        <tissue>Ovary</tissue>
    </source>
</reference>
<reference key="6">
    <citation type="journal article" date="2005" name="Biochem. Biophys. Res. Commun.">
        <title>Characterization of two non-testis-specific CABYR variants that bind to GSK3beta with a proline-rich extensin-like domain.</title>
        <authorList>
            <person name="Hsu H.-C."/>
            <person name="Lee Y.-L."/>
            <person name="Cheng T.-S."/>
            <person name="Howng S.-L."/>
            <person name="Chang L.-K."/>
            <person name="Lu P.-J."/>
            <person name="Hong Y.-R."/>
        </authorList>
    </citation>
    <scope>ALTERNATIVE SPLICING (ISOFORMS 3 AND 5)</scope>
    <scope>SUBUNIT</scope>
    <scope>INTERACTION WITH GSK3B</scope>
    <scope>PHOSPHORYLATION AT THR-151 AND SER-155</scope>
    <scope>MUTAGENESIS OF THR-146; THR-151; SER-154; SER-155 AND THR-159</scope>
    <scope>SUBCELLULAR LOCATION</scope>
    <scope>TISSUE SPECIFICITY</scope>
</reference>
<reference key="7">
    <citation type="journal article" date="2005" name="Dev. Biol.">
        <title>Translation and assembly of CABYR coding region B in fibrous sheath and restriction of calcium binding to coding region A.</title>
        <authorList>
            <person name="Kim Y.-H."/>
            <person name="Jha K.N."/>
            <person name="Mandal A."/>
            <person name="Vanage G."/>
            <person name="Farris E."/>
            <person name="Snow P.L."/>
            <person name="Klotz K."/>
            <person name="Naaby-Hansen S."/>
            <person name="Flickinger C.J."/>
            <person name="Herr J.C."/>
        </authorList>
    </citation>
    <scope>CALCIUM-BINDING</scope>
    <scope>SUBCELLULAR LOCATION</scope>
    <scope>TISSUE SPECIFICITY</scope>
</reference>
<keyword id="KW-0025">Alternative splicing</keyword>
<keyword id="KW-0106">Calcium</keyword>
<keyword id="KW-0966">Cell projection</keyword>
<keyword id="KW-0969">Cilium</keyword>
<keyword id="KW-0963">Cytoplasm</keyword>
<keyword id="KW-0206">Cytoskeleton</keyword>
<keyword id="KW-0903">Direct protein sequencing</keyword>
<keyword id="KW-0282">Flagellum</keyword>
<keyword id="KW-0479">Metal-binding</keyword>
<keyword id="KW-0539">Nucleus</keyword>
<keyword id="KW-0597">Phosphoprotein</keyword>
<keyword id="KW-1267">Proteomics identification</keyword>
<keyword id="KW-1185">Reference proteome</keyword>
<proteinExistence type="evidence at protein level"/>
<accession>O75952</accession>
<accession>B2R857</accession>
<accession>Q8WXW5</accession>
<accession>Q9HAY3</accession>
<accession>Q9HAY4</accession>
<accession>Q9HAY5</accession>
<accession>Q9HCY9</accession>
<gene>
    <name type="primary">CABYR</name>
    <name type="synonym">CBP86</name>
    <name type="synonym">FSP2</name>
</gene>
<dbReference type="EMBL" id="AF088868">
    <property type="protein sequence ID" value="AAC35373.1"/>
    <property type="molecule type" value="mRNA"/>
</dbReference>
<dbReference type="EMBL" id="AF295037">
    <property type="protein sequence ID" value="AAG17889.1"/>
    <property type="molecule type" value="mRNA"/>
</dbReference>
<dbReference type="EMBL" id="AF295038">
    <property type="protein sequence ID" value="AAG17890.1"/>
    <property type="molecule type" value="mRNA"/>
</dbReference>
<dbReference type="EMBL" id="AF295039">
    <property type="protein sequence ID" value="AAG17891.1"/>
    <property type="molecule type" value="mRNA"/>
</dbReference>
<dbReference type="EMBL" id="AF329634">
    <property type="protein sequence ID" value="AAL56051.1"/>
    <property type="molecule type" value="mRNA"/>
</dbReference>
<dbReference type="EMBL" id="AY007205">
    <property type="protein sequence ID" value="AAG01891.1"/>
    <property type="molecule type" value="mRNA"/>
</dbReference>
<dbReference type="EMBL" id="AK313243">
    <property type="protein sequence ID" value="BAG36054.1"/>
    <property type="molecule type" value="mRNA"/>
</dbReference>
<dbReference type="EMBL" id="AC090772">
    <property type="status" value="NOT_ANNOTATED_CDS"/>
    <property type="molecule type" value="Genomic_DNA"/>
</dbReference>
<dbReference type="EMBL" id="CH471088">
    <property type="protein sequence ID" value="EAX01177.1"/>
    <property type="molecule type" value="Genomic_DNA"/>
</dbReference>
<dbReference type="EMBL" id="BC011996">
    <property type="protein sequence ID" value="AAH11996.1"/>
    <property type="molecule type" value="mRNA"/>
</dbReference>
<dbReference type="CCDS" id="CCDS11881.1">
    <molecule id="O75952-1"/>
</dbReference>
<dbReference type="CCDS" id="CCDS11882.1">
    <molecule id="O75952-2"/>
</dbReference>
<dbReference type="CCDS" id="CCDS11883.1">
    <molecule id="O75952-5"/>
</dbReference>
<dbReference type="CCDS" id="CCDS42420.1">
    <molecule id="O75952-3"/>
</dbReference>
<dbReference type="CCDS" id="CCDS45840.1">
    <molecule id="O75952-4"/>
</dbReference>
<dbReference type="RefSeq" id="NP_036321.2">
    <molecule id="O75952-1"/>
    <property type="nucleotide sequence ID" value="NM_012189.3"/>
</dbReference>
<dbReference type="RefSeq" id="NP_619584.1">
    <molecule id="O75952-5"/>
    <property type="nucleotide sequence ID" value="NM_138643.3"/>
</dbReference>
<dbReference type="RefSeq" id="NP_619585.1">
    <molecule id="O75952-3"/>
    <property type="nucleotide sequence ID" value="NM_138644.3"/>
</dbReference>
<dbReference type="RefSeq" id="NP_722452.1">
    <molecule id="O75952-2"/>
    <property type="nucleotide sequence ID" value="NM_153768.3"/>
</dbReference>
<dbReference type="RefSeq" id="NP_722453.1">
    <molecule id="O75952-3"/>
    <property type="nucleotide sequence ID" value="NM_153769.3"/>
</dbReference>
<dbReference type="RefSeq" id="NP_722454.1">
    <molecule id="O75952-4"/>
    <property type="nucleotide sequence ID" value="NM_153770.3"/>
</dbReference>
<dbReference type="RefSeq" id="XP_016881195.1">
    <property type="nucleotide sequence ID" value="XM_017025706.1"/>
</dbReference>
<dbReference type="RefSeq" id="XP_024306928.1">
    <molecule id="O75952-1"/>
    <property type="nucleotide sequence ID" value="XM_024451160.2"/>
</dbReference>
<dbReference type="SMR" id="O75952"/>
<dbReference type="BioGRID" id="117642">
    <property type="interactions" value="6"/>
</dbReference>
<dbReference type="FunCoup" id="O75952">
    <property type="interactions" value="282"/>
</dbReference>
<dbReference type="IntAct" id="O75952">
    <property type="interactions" value="3"/>
</dbReference>
<dbReference type="MINT" id="O75952"/>
<dbReference type="STRING" id="9606.ENSP00000483621"/>
<dbReference type="GlyGen" id="O75952">
    <property type="glycosylation" value="1 site, 1 O-linked glycan (1 site)"/>
</dbReference>
<dbReference type="iPTMnet" id="O75952"/>
<dbReference type="PhosphoSitePlus" id="O75952"/>
<dbReference type="BioMuta" id="CABYR"/>
<dbReference type="jPOST" id="O75952"/>
<dbReference type="MassIVE" id="O75952"/>
<dbReference type="PaxDb" id="9606-ENSP00000483621"/>
<dbReference type="PeptideAtlas" id="O75952"/>
<dbReference type="ProteomicsDB" id="50313">
    <molecule id="O75952-1"/>
</dbReference>
<dbReference type="ProteomicsDB" id="50314">
    <molecule id="O75952-2"/>
</dbReference>
<dbReference type="ProteomicsDB" id="50315">
    <molecule id="O75952-3"/>
</dbReference>
<dbReference type="ProteomicsDB" id="50316">
    <molecule id="O75952-4"/>
</dbReference>
<dbReference type="ProteomicsDB" id="50317">
    <molecule id="O75952-5"/>
</dbReference>
<dbReference type="ProteomicsDB" id="50318">
    <molecule id="O75952-6"/>
</dbReference>
<dbReference type="Antibodypedia" id="22085">
    <property type="antibodies" value="94 antibodies from 24 providers"/>
</dbReference>
<dbReference type="DNASU" id="26256"/>
<dbReference type="Ensembl" id="ENST00000327201.10">
    <molecule id="O75952-5"/>
    <property type="protein sequence ID" value="ENSP00000317095.6"/>
    <property type="gene ID" value="ENSG00000154040.21"/>
</dbReference>
<dbReference type="Ensembl" id="ENST00000399481.6">
    <molecule id="O75952-2"/>
    <property type="protein sequence ID" value="ENSP00000382404.3"/>
    <property type="gene ID" value="ENSG00000154040.21"/>
</dbReference>
<dbReference type="Ensembl" id="ENST00000399496.8">
    <molecule id="O75952-3"/>
    <property type="protein sequence ID" value="ENSP00000382419.3"/>
    <property type="gene ID" value="ENSG00000154040.21"/>
</dbReference>
<dbReference type="Ensembl" id="ENST00000399499.5">
    <molecule id="O75952-3"/>
    <property type="protein sequence ID" value="ENSP00000382421.1"/>
    <property type="gene ID" value="ENSG00000154040.21"/>
</dbReference>
<dbReference type="Ensembl" id="ENST00000415309.6">
    <molecule id="O75952-4"/>
    <property type="protein sequence ID" value="ENSP00000399973.2"/>
    <property type="gene ID" value="ENSG00000154040.21"/>
</dbReference>
<dbReference type="Ensembl" id="ENST00000463087.5">
    <molecule id="O75952-1"/>
    <property type="protein sequence ID" value="ENSP00000432870.1"/>
    <property type="gene ID" value="ENSG00000154040.21"/>
</dbReference>
<dbReference type="Ensembl" id="ENST00000486759.6">
    <molecule id="O75952-1"/>
    <property type="protein sequence ID" value="ENSP00000431142.3"/>
    <property type="gene ID" value="ENSG00000154040.21"/>
</dbReference>
<dbReference type="Ensembl" id="ENST00000621648.4">
    <molecule id="O75952-1"/>
    <property type="protein sequence ID" value="ENSP00000483621.1"/>
    <property type="gene ID" value="ENSG00000154040.21"/>
</dbReference>
<dbReference type="GeneID" id="26256"/>
<dbReference type="KEGG" id="hsa:26256"/>
<dbReference type="MANE-Select" id="ENST00000399496.8">
    <molecule id="O75952-3"/>
    <property type="protein sequence ID" value="ENSP00000382419.3"/>
    <property type="RefSeq nucleotide sequence ID" value="NM_153769.3"/>
    <property type="RefSeq protein sequence ID" value="NP_722453.1"/>
</dbReference>
<dbReference type="UCSC" id="uc002kux.5">
    <molecule id="O75952-1"/>
    <property type="organism name" value="human"/>
</dbReference>
<dbReference type="AGR" id="HGNC:15569"/>
<dbReference type="CTD" id="26256"/>
<dbReference type="DisGeNET" id="26256"/>
<dbReference type="GeneCards" id="CABYR"/>
<dbReference type="HGNC" id="HGNC:15569">
    <property type="gene designation" value="CABYR"/>
</dbReference>
<dbReference type="HPA" id="ENSG00000154040">
    <property type="expression patterns" value="Tissue enriched (testis)"/>
</dbReference>
<dbReference type="MIM" id="612135">
    <property type="type" value="gene"/>
</dbReference>
<dbReference type="neXtProt" id="NX_O75952"/>
<dbReference type="OpenTargets" id="ENSG00000154040"/>
<dbReference type="PharmGKB" id="PA26005"/>
<dbReference type="VEuPathDB" id="HostDB:ENSG00000154040"/>
<dbReference type="eggNOG" id="ENOG502S1NF">
    <property type="taxonomic scope" value="Eukaryota"/>
</dbReference>
<dbReference type="GeneTree" id="ENSGT00390000000444"/>
<dbReference type="HOGENOM" id="CLU_061187_0_0_1"/>
<dbReference type="InParanoid" id="O75952"/>
<dbReference type="OMA" id="MCKNPVE"/>
<dbReference type="OrthoDB" id="252964at2759"/>
<dbReference type="PAN-GO" id="O75952">
    <property type="GO annotations" value="3 GO annotations based on evolutionary models"/>
</dbReference>
<dbReference type="PhylomeDB" id="O75952"/>
<dbReference type="TreeFam" id="TF332959"/>
<dbReference type="PathwayCommons" id="O75952"/>
<dbReference type="SignaLink" id="O75952"/>
<dbReference type="SIGNOR" id="O75952"/>
<dbReference type="BioGRID-ORCS" id="26256">
    <property type="hits" value="6 hits in 1149 CRISPR screens"/>
</dbReference>
<dbReference type="ChiTaRS" id="CABYR">
    <property type="organism name" value="human"/>
</dbReference>
<dbReference type="GeneWiki" id="CABYR"/>
<dbReference type="GenomeRNAi" id="26256"/>
<dbReference type="Pharos" id="O75952">
    <property type="development level" value="Tbio"/>
</dbReference>
<dbReference type="PRO" id="PR:O75952"/>
<dbReference type="Proteomes" id="UP000005640">
    <property type="component" value="Chromosome 18"/>
</dbReference>
<dbReference type="RNAct" id="O75952">
    <property type="molecule type" value="protein"/>
</dbReference>
<dbReference type="Bgee" id="ENSG00000154040">
    <property type="expression patterns" value="Expressed in sperm and 128 other cell types or tissues"/>
</dbReference>
<dbReference type="ExpressionAtlas" id="O75952">
    <property type="expression patterns" value="baseline and differential"/>
</dbReference>
<dbReference type="GO" id="GO:0005737">
    <property type="term" value="C:cytoplasm"/>
    <property type="evidence" value="ECO:0000314"/>
    <property type="project" value="BHF-UCL"/>
</dbReference>
<dbReference type="GO" id="GO:0005856">
    <property type="term" value="C:cytoskeleton"/>
    <property type="evidence" value="ECO:0007669"/>
    <property type="project" value="UniProtKB-SubCell"/>
</dbReference>
<dbReference type="GO" id="GO:0005829">
    <property type="term" value="C:cytosol"/>
    <property type="evidence" value="ECO:0000314"/>
    <property type="project" value="HPA"/>
</dbReference>
<dbReference type="GO" id="GO:0005576">
    <property type="term" value="C:extracellular region"/>
    <property type="evidence" value="ECO:0007669"/>
    <property type="project" value="GOC"/>
</dbReference>
<dbReference type="GO" id="GO:0031514">
    <property type="term" value="C:motile cilium"/>
    <property type="evidence" value="ECO:0000314"/>
    <property type="project" value="BHF-UCL"/>
</dbReference>
<dbReference type="GO" id="GO:0005654">
    <property type="term" value="C:nucleoplasm"/>
    <property type="evidence" value="ECO:0000314"/>
    <property type="project" value="HPA"/>
</dbReference>
<dbReference type="GO" id="GO:0005634">
    <property type="term" value="C:nucleus"/>
    <property type="evidence" value="ECO:0007005"/>
    <property type="project" value="UniProtKB"/>
</dbReference>
<dbReference type="GO" id="GO:0097229">
    <property type="term" value="C:sperm end piece"/>
    <property type="evidence" value="ECO:0007669"/>
    <property type="project" value="Ensembl"/>
</dbReference>
<dbReference type="GO" id="GO:0035686">
    <property type="term" value="C:sperm fibrous sheath"/>
    <property type="evidence" value="ECO:0000314"/>
    <property type="project" value="BHF-UCL"/>
</dbReference>
<dbReference type="GO" id="GO:0097228">
    <property type="term" value="C:sperm principal piece"/>
    <property type="evidence" value="ECO:0000250"/>
    <property type="project" value="UniProtKB"/>
</dbReference>
<dbReference type="GO" id="GO:0005509">
    <property type="term" value="F:calcium ion binding"/>
    <property type="evidence" value="ECO:0000314"/>
    <property type="project" value="BHF-UCL"/>
</dbReference>
<dbReference type="GO" id="GO:0019899">
    <property type="term" value="F:enzyme binding"/>
    <property type="evidence" value="ECO:0000353"/>
    <property type="project" value="BHF-UCL"/>
</dbReference>
<dbReference type="GO" id="GO:0017124">
    <property type="term" value="F:SH3 domain binding"/>
    <property type="evidence" value="ECO:0000303"/>
    <property type="project" value="BHF-UCL"/>
</dbReference>
<dbReference type="GO" id="GO:0003351">
    <property type="term" value="P:epithelial cilium movement involved in extracellular fluid movement"/>
    <property type="evidence" value="ECO:0000303"/>
    <property type="project" value="BHF-UCL"/>
</dbReference>
<dbReference type="GO" id="GO:0048240">
    <property type="term" value="P:sperm capacitation"/>
    <property type="evidence" value="ECO:0000303"/>
    <property type="project" value="BHF-UCL"/>
</dbReference>
<dbReference type="CDD" id="cd12100">
    <property type="entry name" value="DD_CABYR_SP17"/>
    <property type="match status" value="1"/>
</dbReference>
<dbReference type="FunFam" id="1.20.890.10:FF:000005">
    <property type="entry name" value="calcium-binding tyrosine phosphorylation-regulated protein isoform X1"/>
    <property type="match status" value="1"/>
</dbReference>
<dbReference type="Gene3D" id="1.20.890.10">
    <property type="entry name" value="cAMP-dependent protein kinase regulatory subunit, dimerization-anchoring domain"/>
    <property type="match status" value="1"/>
</dbReference>
<dbReference type="InterPro" id="IPR038848">
    <property type="entry name" value="CABYR"/>
</dbReference>
<dbReference type="InterPro" id="IPR003117">
    <property type="entry name" value="cAMP_dep_PK_reg_su_I/II_a/b"/>
</dbReference>
<dbReference type="InterPro" id="IPR047579">
    <property type="entry name" value="DD_CABYR_SP17"/>
</dbReference>
<dbReference type="PANTHER" id="PTHR15494">
    <property type="entry name" value="CALCIUM-BINDING TYROSINE PHOSPHORYLATION-REGULATED PROTEIN"/>
    <property type="match status" value="1"/>
</dbReference>
<dbReference type="PANTHER" id="PTHR15494:SF0">
    <property type="entry name" value="CALCIUM-BINDING TYROSINE PHOSPHORYLATION-REGULATED PROTEIN"/>
    <property type="match status" value="1"/>
</dbReference>
<dbReference type="Pfam" id="PF02197">
    <property type="entry name" value="RIIa"/>
    <property type="match status" value="1"/>
</dbReference>
<dbReference type="SMART" id="SM00394">
    <property type="entry name" value="RIIa"/>
    <property type="match status" value="1"/>
</dbReference>
<dbReference type="SUPFAM" id="SSF47391">
    <property type="entry name" value="Dimerization-anchoring domain of cAMP-dependent PK regulatory subunit"/>
    <property type="match status" value="1"/>
</dbReference>
<comment type="function">
    <text>May function as a regulator of both motility- and head-associated functions such as capacitation and the acrosome reaction. Isoform 1 binds calcium in vitro. Isoform 2 and isoform 6 probably bind calcium. Isoform 3 and isoform 5 do not bind calcium in vitro. Isoform 4 probably does not bind calcium.</text>
</comment>
<comment type="subunit">
    <text evidence="1 4">Interacts with FSCB (By similarity). Isoform 3 self-associates. Isoform 3 and isoform 5 interact with GSK3B. Isoform 1 does not interact with GSK3B.</text>
</comment>
<comment type="interaction">
    <interactant intactId="EBI-10900795">
        <id>O75952-3</id>
    </interactant>
    <interactant intactId="EBI-373586">
        <id>P49841</id>
        <label>GSK3B</label>
    </interactant>
    <organismsDiffer>false</organismsDiffer>
    <experiments>3</experiments>
</comment>
<comment type="interaction">
    <interactant intactId="EBI-10898671">
        <id>O75952-5</id>
    </interactant>
    <interactant intactId="EBI-373586">
        <id>P49841</id>
        <label>GSK3B</label>
    </interactant>
    <organismsDiffer>false</organismsDiffer>
    <experiments>3</experiments>
</comment>
<comment type="subcellular location">
    <subcellularLocation>
        <location>Cytoplasm</location>
        <location>Cytoskeleton</location>
    </subcellularLocation>
    <subcellularLocation>
        <location>Cell projection</location>
        <location>Cilium</location>
        <location>Flagellum</location>
    </subcellularLocation>
    <text>Localized to fibrous sheath including the surface of the longitudinal columns and ribs of the principal piece of sperm flagella.</text>
</comment>
<comment type="subcellular location">
    <molecule>Isoform 1</molecule>
    <subcellularLocation>
        <location>Nucleus</location>
    </subcellularLocation>
    <subcellularLocation>
        <location>Cytoplasm</location>
    </subcellularLocation>
    <subcellularLocation>
        <location>Cell projection</location>
        <location>Cilium</location>
        <location>Flagellum</location>
    </subcellularLocation>
    <text>According to PubMed:15752768, isoform 1, isoform 3 and isoform 5 are both nuclear and cytoplasmic.</text>
</comment>
<comment type="subcellular location">
    <molecule>Isoform 3</molecule>
    <subcellularLocation>
        <location>Nucleus</location>
    </subcellularLocation>
    <subcellularLocation>
        <location>Cytoplasm</location>
    </subcellularLocation>
    <subcellularLocation>
        <location>Cell projection</location>
        <location>Cilium</location>
        <location>Flagellum</location>
    </subcellularLocation>
    <text>According to PubMed:15752768, isoform 1, isoform 3 and isoform 5 are both nuclear and cytoplasmic.</text>
</comment>
<comment type="subcellular location">
    <molecule>Isoform 5</molecule>
    <subcellularLocation>
        <location>Nucleus</location>
    </subcellularLocation>
    <subcellularLocation>
        <location>Cytoplasm</location>
    </subcellularLocation>
    <subcellularLocation>
        <location>Cell projection</location>
        <location>Cilium</location>
        <location>Flagellum</location>
    </subcellularLocation>
    <text>According to PubMed:15752768, isoform 1, isoform 3 and isoform 5 are both nuclear and cytoplasmic.</text>
</comment>
<comment type="alternative products">
    <event type="alternative splicing"/>
    <isoform>
        <id>O75952-1</id>
        <name>1</name>
        <sequence type="displayed"/>
    </isoform>
    <isoform>
        <id>O75952-2</id>
        <name>2</name>
        <name>CBP86-VII</name>
        <sequence type="described" ref="VSP_016247"/>
    </isoform>
    <isoform>
        <id>O75952-3</id>
        <name>3</name>
        <name>CBP86-II</name>
        <sequence type="described" ref="VSP_016248 VSP_016251"/>
    </isoform>
    <isoform>
        <id>O75952-4</id>
        <name>4</name>
        <name>CBP86-IV</name>
        <sequence type="described" ref="VSP_016249 VSP_016250"/>
    </isoform>
    <isoform>
        <id>O75952-5</id>
        <name>5</name>
        <name>CBP86-III</name>
        <sequence type="described" ref="VSP_016246 VSP_016248 VSP_016251"/>
    </isoform>
    <isoform>
        <id>O75952-6</id>
        <name>6</name>
        <name>CBP86-VI</name>
        <sequence type="described" ref="VSP_016245"/>
    </isoform>
</comment>
<comment type="tissue specificity">
    <text evidence="3 4 5">Expressed in elongating spermatids and spermatozoa (at protein level). Isoform 1 is expressed in testis. Isoform 3 and isoform 5 are also expressed in brain, pancreas and numerous brain tumors.</text>
</comment>
<comment type="PTM">
    <text evidence="3 4">Isoform 1 is phosphorylated on tyrosine residues during in vitro capacitation. Isoform 3 and isoform 5 are phosphorylated by GSK3B in vitro. Dephosphorylation affects its ability to bind calcium.</text>
</comment>
<comment type="miscellaneous">
    <molecule>Isoform 1</molecule>
    <text>May be produced at very low levels due to a premature stop codon in the mRNA, leading to nonsense-mediated mRNA decay.</text>
</comment>
<comment type="miscellaneous">
    <molecule>Isoform 2</molecule>
    <text evidence="9">May be produced at very low levels due to a premature stop codon in the mRNA, leading to nonsense-mediated mRNA decay.</text>
</comment>
<feature type="chain" id="PRO_0000089268" description="Calcium-binding tyrosine phosphorylation-regulated protein">
    <location>
        <begin position="1"/>
        <end position="493"/>
    </location>
</feature>
<feature type="domain" description="RIIa">
    <location>
        <begin position="12"/>
        <end position="49"/>
    </location>
</feature>
<feature type="region of interest" description="Disordered" evidence="2">
    <location>
        <begin position="85"/>
        <end position="164"/>
    </location>
</feature>
<feature type="region of interest" description="Disordered" evidence="2">
    <location>
        <begin position="244"/>
        <end position="271"/>
    </location>
</feature>
<feature type="region of interest" description="Disordered" evidence="2">
    <location>
        <begin position="330"/>
        <end position="354"/>
    </location>
</feature>
<feature type="region of interest" description="Disordered" evidence="2">
    <location>
        <begin position="426"/>
        <end position="493"/>
    </location>
</feature>
<feature type="compositionally biased region" description="Polar residues" evidence="2">
    <location>
        <begin position="90"/>
        <end position="100"/>
    </location>
</feature>
<feature type="compositionally biased region" description="Basic and acidic residues" evidence="2">
    <location>
        <begin position="101"/>
        <end position="117"/>
    </location>
</feature>
<feature type="compositionally biased region" description="Low complexity" evidence="2">
    <location>
        <begin position="141"/>
        <end position="152"/>
    </location>
</feature>
<feature type="compositionally biased region" description="Polar residues" evidence="2">
    <location>
        <begin position="426"/>
        <end position="442"/>
    </location>
</feature>
<feature type="compositionally biased region" description="Polar residues" evidence="2">
    <location>
        <begin position="461"/>
        <end position="470"/>
    </location>
</feature>
<feature type="compositionally biased region" description="Acidic residues" evidence="2">
    <location>
        <begin position="484"/>
        <end position="493"/>
    </location>
</feature>
<feature type="modified residue" description="Phosphothreonine" evidence="10">
    <location>
        <position position="151"/>
    </location>
</feature>
<feature type="modified residue" description="Phosphoserine" evidence="10">
    <location>
        <position position="155"/>
    </location>
</feature>
<feature type="splice variant" id="VSP_016245" description="In isoform 6." evidence="6">
    <location>
        <begin position="1"/>
        <end position="201"/>
    </location>
</feature>
<feature type="splice variant" id="VSP_016246" description="In isoform 5." evidence="6">
    <location>
        <begin position="1"/>
        <end position="98"/>
    </location>
</feature>
<feature type="splice variant" id="VSP_016247" description="In isoform 2." evidence="6 7">
    <location>
        <begin position="49"/>
        <end position="66"/>
    </location>
</feature>
<feature type="splice variant" id="VSP_016248" description="In isoform 3 and isoform 5." evidence="6 8">
    <original>GKVSSIHSDQSDVLMVDVATSMPVVIKEVPSSEAAEDVMVAAPLVCSGKVLEVQVVNQTSVHVDLGSQPKENEAEPSTASSVPLQDEQEPPAYDQAPEVTLQADIEVMSTVHISSVYNDVPVTEGVVYIEQLPEQIVIPFTDQVACLKENEQSKENEQSPRVSPKSVVEKTTSGMSKKSVESVKLAQLEENAKYSSVYM</original>
    <variation>AMATSERGQPPPCSNMWTLYCLTDKNQQGHPSPPPAPGPFPQATLYLPNPKDPQFQQHPPKVTFPTYVMGDTKKTSAPPFILVGSNVQEAQGWKPLPGHAVVSQSDVLRYVAMQVPIAVPADEKYQKHTLSPQNANPPSGQDVPRPKSPVFLSVAFPVEDVAKKSSGSGDKCAPFGSYGIAGEVTVTTAHKRRKAETEN</variation>
    <location>
        <begin position="181"/>
        <end position="379"/>
    </location>
</feature>
<feature type="splice variant" id="VSP_016249" description="In isoform 4." evidence="6">
    <original>GKVSSIHSDQSDVLMVDVATSMPVVIKEVPSSEAAEDVMVA</original>
    <variation>EDVAKKSSGSGDKCAPFGSYGIAGEVTVTTAHKRRKAETEN</variation>
    <location>
        <begin position="181"/>
        <end position="221"/>
    </location>
</feature>
<feature type="splice variant" id="VSP_016250" description="In isoform 4." evidence="6">
    <location>
        <begin position="222"/>
        <end position="493"/>
    </location>
</feature>
<feature type="splice variant" id="VSP_016251" description="In isoform 3 and isoform 5." evidence="6 8">
    <location>
        <begin position="380"/>
        <end position="493"/>
    </location>
</feature>
<feature type="sequence variant" id="VAR_030040" description="In dbSNP:rs3786417.">
    <original>T</original>
    <variation>M</variation>
    <location>
        <position position="74"/>
    </location>
</feature>
<feature type="sequence variant" id="VAR_050709" description="In dbSNP:rs35118855.">
    <original>I</original>
    <variation>V</variation>
    <location>
        <position position="186"/>
    </location>
</feature>
<feature type="sequence variant" id="VAR_030041" description="In dbSNP:rs1049682." evidence="3">
    <original>K</original>
    <variation>R</variation>
    <location>
        <position position="448"/>
    </location>
</feature>
<feature type="sequence variant" id="VAR_023818" description="In dbSNP:rs1049683." evidence="3">
    <original>S</original>
    <variation>A</variation>
    <location>
        <position position="490"/>
    </location>
</feature>
<feature type="mutagenesis site" description="Does not affect phosphorylation." evidence="4">
    <original>T</original>
    <variation>A</variation>
    <location>
        <position position="146"/>
    </location>
</feature>
<feature type="mutagenesis site" description="Decreases phosphorylation. Abolishes phosphorylation; when associated with A-155." evidence="4">
    <original>T</original>
    <variation>A</variation>
    <location>
        <position position="151"/>
    </location>
</feature>
<feature type="mutagenesis site" description="Does not affect phosphorylation. Does not affect phosphorylation; when associated with A-159." evidence="4">
    <original>S</original>
    <variation>A</variation>
    <location>
        <position position="154"/>
    </location>
</feature>
<feature type="mutagenesis site" description="Decreases phosphorylation and interaction with GSK3B. Abolishes phosphorylation and decreases interaction with GSK3B; when associated with A-151." evidence="4">
    <original>S</original>
    <variation>A</variation>
    <location>
        <position position="155"/>
    </location>
</feature>
<feature type="mutagenesis site" description="Does not affect phosphorylation. Does not affect phosphorylation; when associated with A-154." evidence="4">
    <original>T</original>
    <variation>A</variation>
    <location>
        <position position="159"/>
    </location>
</feature>
<feature type="sequence conflict" description="In Ref. 1; AAC35373/AAL56051." evidence="9" ref="1">
    <original>I</original>
    <variation>V</variation>
    <location>
        <position position="423"/>
    </location>
</feature>